<organism>
    <name type="scientific">Brucella abortus (strain 2308)</name>
    <dbReference type="NCBI Taxonomy" id="359391"/>
    <lineage>
        <taxon>Bacteria</taxon>
        <taxon>Pseudomonadati</taxon>
        <taxon>Pseudomonadota</taxon>
        <taxon>Alphaproteobacteria</taxon>
        <taxon>Hyphomicrobiales</taxon>
        <taxon>Brucellaceae</taxon>
        <taxon>Brucella/Ochrobactrum group</taxon>
        <taxon>Brucella</taxon>
    </lineage>
</organism>
<feature type="chain" id="PRO_1000018675" description="Phosphoribosylaminoimidazole-succinocarboxamide synthase">
    <location>
        <begin position="1"/>
        <end position="254"/>
    </location>
</feature>
<reference key="1">
    <citation type="journal article" date="2005" name="Infect. Immun.">
        <title>Whole-genome analyses of speciation events in pathogenic Brucellae.</title>
        <authorList>
            <person name="Chain P.S."/>
            <person name="Comerci D.J."/>
            <person name="Tolmasky M.E."/>
            <person name="Larimer F.W."/>
            <person name="Malfatti S.A."/>
            <person name="Vergez L.M."/>
            <person name="Aguero F."/>
            <person name="Land M.L."/>
            <person name="Ugalde R.A."/>
            <person name="Garcia E."/>
        </authorList>
    </citation>
    <scope>NUCLEOTIDE SEQUENCE [LARGE SCALE GENOMIC DNA]</scope>
    <source>
        <strain>2308</strain>
    </source>
</reference>
<gene>
    <name evidence="1" type="primary">purC</name>
    <name type="ordered locus">BAB1_0862</name>
</gene>
<protein>
    <recommendedName>
        <fullName evidence="1">Phosphoribosylaminoimidazole-succinocarboxamide synthase</fullName>
        <ecNumber evidence="1">6.3.2.6</ecNumber>
    </recommendedName>
    <alternativeName>
        <fullName evidence="1">SAICAR synthetase</fullName>
    </alternativeName>
</protein>
<accession>Q2YNG1</accession>
<comment type="catalytic activity">
    <reaction evidence="1">
        <text>5-amino-1-(5-phospho-D-ribosyl)imidazole-4-carboxylate + L-aspartate + ATP = (2S)-2-[5-amino-1-(5-phospho-beta-D-ribosyl)imidazole-4-carboxamido]succinate + ADP + phosphate + 2 H(+)</text>
        <dbReference type="Rhea" id="RHEA:22628"/>
        <dbReference type="ChEBI" id="CHEBI:15378"/>
        <dbReference type="ChEBI" id="CHEBI:29991"/>
        <dbReference type="ChEBI" id="CHEBI:30616"/>
        <dbReference type="ChEBI" id="CHEBI:43474"/>
        <dbReference type="ChEBI" id="CHEBI:58443"/>
        <dbReference type="ChEBI" id="CHEBI:77657"/>
        <dbReference type="ChEBI" id="CHEBI:456216"/>
        <dbReference type="EC" id="6.3.2.6"/>
    </reaction>
</comment>
<comment type="pathway">
    <text evidence="1">Purine metabolism; IMP biosynthesis via de novo pathway; 5-amino-1-(5-phospho-D-ribosyl)imidazole-4-carboxamide from 5-amino-1-(5-phospho-D-ribosyl)imidazole-4-carboxylate: step 1/2.</text>
</comment>
<comment type="similarity">
    <text evidence="1">Belongs to the SAICAR synthetase family.</text>
</comment>
<name>PUR7_BRUA2</name>
<keyword id="KW-0067">ATP-binding</keyword>
<keyword id="KW-0436">Ligase</keyword>
<keyword id="KW-0547">Nucleotide-binding</keyword>
<keyword id="KW-0658">Purine biosynthesis</keyword>
<keyword id="KW-1185">Reference proteome</keyword>
<evidence type="ECO:0000255" key="1">
    <source>
        <dbReference type="HAMAP-Rule" id="MF_00137"/>
    </source>
</evidence>
<sequence length="254" mass="28936">MNRRRRIYEGKAKILYEGPEPGTLVQFFKDDATAFNAKKHEVIDGKGVLNNRISEHIFTQLNRIGIPTHFIRRLNMREQLIKEVEIIPLEVVVRNVAAGSLAKHLGLEEGTILPRSIIEFYYKADALNDPMVTEEHITAFGWASPQEIDDIMALAIRVNDFLTGLFLGIGIQLVDFKMECGRLWEGDMMRIVVADEISPDSARLWDITTNDKLDKDRFRRDMGGLVEAYQEVARRLGIMNENDTPRPSGPTLVK</sequence>
<dbReference type="EC" id="6.3.2.6" evidence="1"/>
<dbReference type="EMBL" id="AM040264">
    <property type="protein sequence ID" value="CAJ10818.1"/>
    <property type="molecule type" value="Genomic_DNA"/>
</dbReference>
<dbReference type="RefSeq" id="WP_002966778.1">
    <property type="nucleotide sequence ID" value="NZ_KN046823.1"/>
</dbReference>
<dbReference type="SMR" id="Q2YNG1"/>
<dbReference type="STRING" id="359391.BAB1_0862"/>
<dbReference type="GeneID" id="93016776"/>
<dbReference type="KEGG" id="bmf:BAB1_0862"/>
<dbReference type="PATRIC" id="fig|359391.11.peg.3171"/>
<dbReference type="HOGENOM" id="CLU_061495_2_0_5"/>
<dbReference type="PhylomeDB" id="Q2YNG1"/>
<dbReference type="UniPathway" id="UPA00074">
    <property type="reaction ID" value="UER00131"/>
</dbReference>
<dbReference type="Proteomes" id="UP000002719">
    <property type="component" value="Chromosome I"/>
</dbReference>
<dbReference type="GO" id="GO:0005829">
    <property type="term" value="C:cytosol"/>
    <property type="evidence" value="ECO:0007669"/>
    <property type="project" value="TreeGrafter"/>
</dbReference>
<dbReference type="GO" id="GO:0005524">
    <property type="term" value="F:ATP binding"/>
    <property type="evidence" value="ECO:0007669"/>
    <property type="project" value="UniProtKB-KW"/>
</dbReference>
<dbReference type="GO" id="GO:0004639">
    <property type="term" value="F:phosphoribosylaminoimidazolesuccinocarboxamide synthase activity"/>
    <property type="evidence" value="ECO:0007669"/>
    <property type="project" value="UniProtKB-UniRule"/>
</dbReference>
<dbReference type="GO" id="GO:0006189">
    <property type="term" value="P:'de novo' IMP biosynthetic process"/>
    <property type="evidence" value="ECO:0007669"/>
    <property type="project" value="UniProtKB-UniRule"/>
</dbReference>
<dbReference type="GO" id="GO:0009236">
    <property type="term" value="P:cobalamin biosynthetic process"/>
    <property type="evidence" value="ECO:0007669"/>
    <property type="project" value="InterPro"/>
</dbReference>
<dbReference type="CDD" id="cd01415">
    <property type="entry name" value="SAICAR_synt_PurC"/>
    <property type="match status" value="1"/>
</dbReference>
<dbReference type="FunFam" id="3.30.470.20:FF:000006">
    <property type="entry name" value="Phosphoribosylaminoimidazole-succinocarboxamide synthase"/>
    <property type="match status" value="1"/>
</dbReference>
<dbReference type="Gene3D" id="3.30.470.20">
    <property type="entry name" value="ATP-grasp fold, B domain"/>
    <property type="match status" value="1"/>
</dbReference>
<dbReference type="Gene3D" id="3.30.200.20">
    <property type="entry name" value="Phosphorylase Kinase, domain 1"/>
    <property type="match status" value="1"/>
</dbReference>
<dbReference type="HAMAP" id="MF_00137">
    <property type="entry name" value="SAICAR_synth"/>
    <property type="match status" value="1"/>
</dbReference>
<dbReference type="InterPro" id="IPR028923">
    <property type="entry name" value="SAICAR_synt/ADE2_N"/>
</dbReference>
<dbReference type="InterPro" id="IPR033934">
    <property type="entry name" value="SAICAR_synt_PurC"/>
</dbReference>
<dbReference type="InterPro" id="IPR001636">
    <property type="entry name" value="SAICAR_synth"/>
</dbReference>
<dbReference type="InterPro" id="IPR050089">
    <property type="entry name" value="SAICAR_synthetase"/>
</dbReference>
<dbReference type="InterPro" id="IPR018236">
    <property type="entry name" value="SAICAR_synthetase_CS"/>
</dbReference>
<dbReference type="NCBIfam" id="TIGR00081">
    <property type="entry name" value="purC"/>
    <property type="match status" value="1"/>
</dbReference>
<dbReference type="PANTHER" id="PTHR43599">
    <property type="entry name" value="MULTIFUNCTIONAL PROTEIN ADE2"/>
    <property type="match status" value="1"/>
</dbReference>
<dbReference type="PANTHER" id="PTHR43599:SF3">
    <property type="entry name" value="SI:DKEY-6E2.2"/>
    <property type="match status" value="1"/>
</dbReference>
<dbReference type="Pfam" id="PF01259">
    <property type="entry name" value="SAICAR_synt"/>
    <property type="match status" value="1"/>
</dbReference>
<dbReference type="SUPFAM" id="SSF56104">
    <property type="entry name" value="SAICAR synthase-like"/>
    <property type="match status" value="1"/>
</dbReference>
<dbReference type="PROSITE" id="PS01057">
    <property type="entry name" value="SAICAR_SYNTHETASE_1"/>
    <property type="match status" value="1"/>
</dbReference>
<proteinExistence type="inferred from homology"/>